<dbReference type="EC" id="7.1.1.-" evidence="1"/>
<dbReference type="EMBL" id="AP009366">
    <property type="protein sequence ID" value="BAF49775.1"/>
    <property type="molecule type" value="Genomic_DNA"/>
</dbReference>
<dbReference type="RefSeq" id="YP_001122951.1">
    <property type="nucleotide sequence ID" value="NC_009265.1"/>
</dbReference>
<dbReference type="SMR" id="A4QJC0"/>
<dbReference type="GeneID" id="4968624"/>
<dbReference type="GO" id="GO:0009535">
    <property type="term" value="C:chloroplast thylakoid membrane"/>
    <property type="evidence" value="ECO:0007669"/>
    <property type="project" value="UniProtKB-SubCell"/>
</dbReference>
<dbReference type="GO" id="GO:0030964">
    <property type="term" value="C:NADH dehydrogenase complex"/>
    <property type="evidence" value="ECO:0007669"/>
    <property type="project" value="TreeGrafter"/>
</dbReference>
<dbReference type="GO" id="GO:0008137">
    <property type="term" value="F:NADH dehydrogenase (ubiquinone) activity"/>
    <property type="evidence" value="ECO:0007669"/>
    <property type="project" value="InterPro"/>
</dbReference>
<dbReference type="GO" id="GO:0048038">
    <property type="term" value="F:quinone binding"/>
    <property type="evidence" value="ECO:0007669"/>
    <property type="project" value="UniProtKB-KW"/>
</dbReference>
<dbReference type="GO" id="GO:0019684">
    <property type="term" value="P:photosynthesis, light reaction"/>
    <property type="evidence" value="ECO:0007669"/>
    <property type="project" value="UniProtKB-UniRule"/>
</dbReference>
<dbReference type="FunFam" id="1.20.58.1610:FF:000001">
    <property type="entry name" value="NAD(P)H-quinone oxidoreductase subunit 3, chloroplastic"/>
    <property type="match status" value="1"/>
</dbReference>
<dbReference type="Gene3D" id="1.20.58.1610">
    <property type="entry name" value="NADH:ubiquinone/plastoquinone oxidoreductase, chain 3"/>
    <property type="match status" value="1"/>
</dbReference>
<dbReference type="HAMAP" id="MF_01394">
    <property type="entry name" value="NDH1_NuoA"/>
    <property type="match status" value="1"/>
</dbReference>
<dbReference type="InterPro" id="IPR023043">
    <property type="entry name" value="NAD(P)H_OxRDtase_bac/plastid"/>
</dbReference>
<dbReference type="InterPro" id="IPR000440">
    <property type="entry name" value="NADH_UbQ/plastoQ_OxRdtase_su3"/>
</dbReference>
<dbReference type="InterPro" id="IPR038430">
    <property type="entry name" value="NDAH_ubi_oxred_su3_sf"/>
</dbReference>
<dbReference type="PANTHER" id="PTHR11058">
    <property type="entry name" value="NADH-UBIQUINONE OXIDOREDUCTASE CHAIN 3"/>
    <property type="match status" value="1"/>
</dbReference>
<dbReference type="PANTHER" id="PTHR11058:SF9">
    <property type="entry name" value="NADH-UBIQUINONE OXIDOREDUCTASE CHAIN 3"/>
    <property type="match status" value="1"/>
</dbReference>
<dbReference type="Pfam" id="PF00507">
    <property type="entry name" value="Oxidored_q4"/>
    <property type="match status" value="1"/>
</dbReference>
<name>NU3C_AETCO</name>
<feature type="chain" id="PRO_0000362803" description="NAD(P)H-quinone oxidoreductase subunit 3, chloroplastic">
    <location>
        <begin position="1"/>
        <end position="120"/>
    </location>
</feature>
<feature type="transmembrane region" description="Helical" evidence="1">
    <location>
        <begin position="9"/>
        <end position="29"/>
    </location>
</feature>
<feature type="transmembrane region" description="Helical" evidence="1">
    <location>
        <begin position="64"/>
        <end position="84"/>
    </location>
</feature>
<feature type="transmembrane region" description="Helical" evidence="1">
    <location>
        <begin position="88"/>
        <end position="108"/>
    </location>
</feature>
<organism>
    <name type="scientific">Aethionema cordifolium</name>
    <name type="common">Lebanon stonecress</name>
    <dbReference type="NCBI Taxonomy" id="434059"/>
    <lineage>
        <taxon>Eukaryota</taxon>
        <taxon>Viridiplantae</taxon>
        <taxon>Streptophyta</taxon>
        <taxon>Embryophyta</taxon>
        <taxon>Tracheophyta</taxon>
        <taxon>Spermatophyta</taxon>
        <taxon>Magnoliopsida</taxon>
        <taxon>eudicotyledons</taxon>
        <taxon>Gunneridae</taxon>
        <taxon>Pentapetalae</taxon>
        <taxon>rosids</taxon>
        <taxon>malvids</taxon>
        <taxon>Brassicales</taxon>
        <taxon>Brassicaceae</taxon>
        <taxon>Aethionemeae</taxon>
        <taxon>Aethionema</taxon>
    </lineage>
</organism>
<proteinExistence type="inferred from homology"/>
<gene>
    <name evidence="1" type="primary">ndhC</name>
</gene>
<geneLocation type="chloroplast"/>
<protein>
    <recommendedName>
        <fullName evidence="1">NAD(P)H-quinone oxidoreductase subunit 3, chloroplastic</fullName>
        <ecNumber evidence="1">7.1.1.-</ecNumber>
    </recommendedName>
    <alternativeName>
        <fullName evidence="1">NAD(P)H dehydrogenase subunit 3</fullName>
    </alternativeName>
    <alternativeName>
        <fullName evidence="1">NADH-plastoquinone oxidoreductase subunit 3</fullName>
    </alternativeName>
</protein>
<comment type="function">
    <text evidence="1">NDH shuttles electrons from NAD(P)H:plastoquinone, via FMN and iron-sulfur (Fe-S) centers, to quinones in the photosynthetic chain and possibly in a chloroplast respiratory chain. The immediate electron acceptor for the enzyme in this species is believed to be plastoquinone. Couples the redox reaction to proton translocation, and thus conserves the redox energy in a proton gradient.</text>
</comment>
<comment type="catalytic activity">
    <reaction evidence="1">
        <text>a plastoquinone + NADH + (n+1) H(+)(in) = a plastoquinol + NAD(+) + n H(+)(out)</text>
        <dbReference type="Rhea" id="RHEA:42608"/>
        <dbReference type="Rhea" id="RHEA-COMP:9561"/>
        <dbReference type="Rhea" id="RHEA-COMP:9562"/>
        <dbReference type="ChEBI" id="CHEBI:15378"/>
        <dbReference type="ChEBI" id="CHEBI:17757"/>
        <dbReference type="ChEBI" id="CHEBI:57540"/>
        <dbReference type="ChEBI" id="CHEBI:57945"/>
        <dbReference type="ChEBI" id="CHEBI:62192"/>
    </reaction>
</comment>
<comment type="catalytic activity">
    <reaction evidence="1">
        <text>a plastoquinone + NADPH + (n+1) H(+)(in) = a plastoquinol + NADP(+) + n H(+)(out)</text>
        <dbReference type="Rhea" id="RHEA:42612"/>
        <dbReference type="Rhea" id="RHEA-COMP:9561"/>
        <dbReference type="Rhea" id="RHEA-COMP:9562"/>
        <dbReference type="ChEBI" id="CHEBI:15378"/>
        <dbReference type="ChEBI" id="CHEBI:17757"/>
        <dbReference type="ChEBI" id="CHEBI:57783"/>
        <dbReference type="ChEBI" id="CHEBI:58349"/>
        <dbReference type="ChEBI" id="CHEBI:62192"/>
    </reaction>
</comment>
<comment type="subunit">
    <text evidence="1">NDH is composed of at least 16 different subunits, 5 of which are encoded in the nucleus.</text>
</comment>
<comment type="subcellular location">
    <subcellularLocation>
        <location evidence="1">Plastid</location>
        <location evidence="1">Chloroplast thylakoid membrane</location>
        <topology evidence="1">Multi-pass membrane protein</topology>
    </subcellularLocation>
</comment>
<comment type="similarity">
    <text evidence="1">Belongs to the complex I subunit 3 family.</text>
</comment>
<sequence length="120" mass="13902">MFLLYEYDIFWAFLIISSAIPFLAFLISGILSPIRKGPEKLSSYESGIEPIGDAWLQFRIRYYMFALVFVVFDVETVFLYPWAMSFDVLGVSAFIEAFIFVLILILGLVYAWRKGALEWS</sequence>
<accession>A4QJC0</accession>
<keyword id="KW-0150">Chloroplast</keyword>
<keyword id="KW-0472">Membrane</keyword>
<keyword id="KW-0520">NAD</keyword>
<keyword id="KW-0521">NADP</keyword>
<keyword id="KW-0934">Plastid</keyword>
<keyword id="KW-0618">Plastoquinone</keyword>
<keyword id="KW-0874">Quinone</keyword>
<keyword id="KW-0793">Thylakoid</keyword>
<keyword id="KW-1278">Translocase</keyword>
<keyword id="KW-0812">Transmembrane</keyword>
<keyword id="KW-1133">Transmembrane helix</keyword>
<keyword id="KW-0813">Transport</keyword>
<evidence type="ECO:0000255" key="1">
    <source>
        <dbReference type="HAMAP-Rule" id="MF_01394"/>
    </source>
</evidence>
<reference key="1">
    <citation type="submission" date="2007-03" db="EMBL/GenBank/DDBJ databases">
        <title>Sequencing analysis of Aethionema coridifolium chloroplast DNA.</title>
        <authorList>
            <person name="Hosouchi T."/>
            <person name="Tsuruoka H."/>
            <person name="Kotani H."/>
        </authorList>
    </citation>
    <scope>NUCLEOTIDE SEQUENCE [LARGE SCALE GENOMIC DNA]</scope>
</reference>